<reference key="1">
    <citation type="submission" date="2007-07" db="EMBL/GenBank/DDBJ databases">
        <title>Complete sequence of chromosome of Shewanella baltica OS185.</title>
        <authorList>
            <consortium name="US DOE Joint Genome Institute"/>
            <person name="Copeland A."/>
            <person name="Lucas S."/>
            <person name="Lapidus A."/>
            <person name="Barry K."/>
            <person name="Glavina del Rio T."/>
            <person name="Dalin E."/>
            <person name="Tice H."/>
            <person name="Pitluck S."/>
            <person name="Sims D."/>
            <person name="Brettin T."/>
            <person name="Bruce D."/>
            <person name="Detter J.C."/>
            <person name="Han C."/>
            <person name="Schmutz J."/>
            <person name="Larimer F."/>
            <person name="Land M."/>
            <person name="Hauser L."/>
            <person name="Kyrpides N."/>
            <person name="Mikhailova N."/>
            <person name="Brettar I."/>
            <person name="Rodrigues J."/>
            <person name="Konstantinidis K."/>
            <person name="Tiedje J."/>
            <person name="Richardson P."/>
        </authorList>
    </citation>
    <scope>NUCLEOTIDE SEQUENCE [LARGE SCALE GENOMIC DNA]</scope>
    <source>
        <strain>OS185</strain>
    </source>
</reference>
<keyword id="KW-0028">Amino-acid biosynthesis</keyword>
<keyword id="KW-0170">Cobalt</keyword>
<keyword id="KW-0220">Diaminopimelate biosynthesis</keyword>
<keyword id="KW-0378">Hydrolase</keyword>
<keyword id="KW-0457">Lysine biosynthesis</keyword>
<keyword id="KW-0479">Metal-binding</keyword>
<keyword id="KW-0862">Zinc</keyword>
<dbReference type="EC" id="3.5.1.18" evidence="1"/>
<dbReference type="EMBL" id="CP000753">
    <property type="protein sequence ID" value="ABS08492.1"/>
    <property type="molecule type" value="Genomic_DNA"/>
</dbReference>
<dbReference type="RefSeq" id="WP_012089325.1">
    <property type="nucleotide sequence ID" value="NC_009665.1"/>
</dbReference>
<dbReference type="SMR" id="A6WNV3"/>
<dbReference type="KEGG" id="sbm:Shew185_2354"/>
<dbReference type="HOGENOM" id="CLU_021802_4_0_6"/>
<dbReference type="UniPathway" id="UPA00034">
    <property type="reaction ID" value="UER00021"/>
</dbReference>
<dbReference type="GO" id="GO:0008777">
    <property type="term" value="F:acetylornithine deacetylase activity"/>
    <property type="evidence" value="ECO:0007669"/>
    <property type="project" value="TreeGrafter"/>
</dbReference>
<dbReference type="GO" id="GO:0050897">
    <property type="term" value="F:cobalt ion binding"/>
    <property type="evidence" value="ECO:0007669"/>
    <property type="project" value="UniProtKB-UniRule"/>
</dbReference>
<dbReference type="GO" id="GO:0009014">
    <property type="term" value="F:succinyl-diaminopimelate desuccinylase activity"/>
    <property type="evidence" value="ECO:0007669"/>
    <property type="project" value="UniProtKB-UniRule"/>
</dbReference>
<dbReference type="GO" id="GO:0008270">
    <property type="term" value="F:zinc ion binding"/>
    <property type="evidence" value="ECO:0007669"/>
    <property type="project" value="UniProtKB-UniRule"/>
</dbReference>
<dbReference type="GO" id="GO:0019877">
    <property type="term" value="P:diaminopimelate biosynthetic process"/>
    <property type="evidence" value="ECO:0007669"/>
    <property type="project" value="UniProtKB-UniRule"/>
</dbReference>
<dbReference type="GO" id="GO:0006526">
    <property type="term" value="P:L-arginine biosynthetic process"/>
    <property type="evidence" value="ECO:0007669"/>
    <property type="project" value="TreeGrafter"/>
</dbReference>
<dbReference type="GO" id="GO:0009089">
    <property type="term" value="P:lysine biosynthetic process via diaminopimelate"/>
    <property type="evidence" value="ECO:0007669"/>
    <property type="project" value="UniProtKB-UniRule"/>
</dbReference>
<dbReference type="CDD" id="cd03891">
    <property type="entry name" value="M20_DapE_proteobac"/>
    <property type="match status" value="1"/>
</dbReference>
<dbReference type="FunFam" id="3.30.70.360:FF:000011">
    <property type="entry name" value="Succinyl-diaminopimelate desuccinylase"/>
    <property type="match status" value="1"/>
</dbReference>
<dbReference type="FunFam" id="3.40.630.10:FF:000005">
    <property type="entry name" value="Succinyl-diaminopimelate desuccinylase"/>
    <property type="match status" value="1"/>
</dbReference>
<dbReference type="Gene3D" id="3.40.630.10">
    <property type="entry name" value="Zn peptidases"/>
    <property type="match status" value="2"/>
</dbReference>
<dbReference type="HAMAP" id="MF_01690">
    <property type="entry name" value="DapE"/>
    <property type="match status" value="1"/>
</dbReference>
<dbReference type="InterPro" id="IPR001261">
    <property type="entry name" value="ArgE/DapE_CS"/>
</dbReference>
<dbReference type="InterPro" id="IPR036264">
    <property type="entry name" value="Bact_exopeptidase_dim_dom"/>
</dbReference>
<dbReference type="InterPro" id="IPR005941">
    <property type="entry name" value="DapE_proteobac"/>
</dbReference>
<dbReference type="InterPro" id="IPR002933">
    <property type="entry name" value="Peptidase_M20"/>
</dbReference>
<dbReference type="InterPro" id="IPR011650">
    <property type="entry name" value="Peptidase_M20_dimer"/>
</dbReference>
<dbReference type="InterPro" id="IPR050072">
    <property type="entry name" value="Peptidase_M20A"/>
</dbReference>
<dbReference type="NCBIfam" id="TIGR01246">
    <property type="entry name" value="dapE_proteo"/>
    <property type="match status" value="1"/>
</dbReference>
<dbReference type="NCBIfam" id="NF009557">
    <property type="entry name" value="PRK13009.1"/>
    <property type="match status" value="1"/>
</dbReference>
<dbReference type="PANTHER" id="PTHR43808">
    <property type="entry name" value="ACETYLORNITHINE DEACETYLASE"/>
    <property type="match status" value="1"/>
</dbReference>
<dbReference type="PANTHER" id="PTHR43808:SF31">
    <property type="entry name" value="N-ACETYL-L-CITRULLINE DEACETYLASE"/>
    <property type="match status" value="1"/>
</dbReference>
<dbReference type="Pfam" id="PF07687">
    <property type="entry name" value="M20_dimer"/>
    <property type="match status" value="1"/>
</dbReference>
<dbReference type="Pfam" id="PF01546">
    <property type="entry name" value="Peptidase_M20"/>
    <property type="match status" value="1"/>
</dbReference>
<dbReference type="SUPFAM" id="SSF55031">
    <property type="entry name" value="Bacterial exopeptidase dimerisation domain"/>
    <property type="match status" value="1"/>
</dbReference>
<dbReference type="SUPFAM" id="SSF53187">
    <property type="entry name" value="Zn-dependent exopeptidases"/>
    <property type="match status" value="1"/>
</dbReference>
<dbReference type="PROSITE" id="PS00759">
    <property type="entry name" value="ARGE_DAPE_CPG2_2"/>
    <property type="match status" value="1"/>
</dbReference>
<feature type="chain" id="PRO_0000375727" description="Succinyl-diaminopimelate desuccinylase">
    <location>
        <begin position="1"/>
        <end position="380"/>
    </location>
</feature>
<feature type="active site" evidence="1">
    <location>
        <position position="73"/>
    </location>
</feature>
<feature type="active site" description="Proton acceptor" evidence="1">
    <location>
        <position position="138"/>
    </location>
</feature>
<feature type="binding site" evidence="1">
    <location>
        <position position="71"/>
    </location>
    <ligand>
        <name>Zn(2+)</name>
        <dbReference type="ChEBI" id="CHEBI:29105"/>
        <label>1</label>
    </ligand>
</feature>
<feature type="binding site" evidence="1">
    <location>
        <position position="104"/>
    </location>
    <ligand>
        <name>Zn(2+)</name>
        <dbReference type="ChEBI" id="CHEBI:29105"/>
        <label>1</label>
    </ligand>
</feature>
<feature type="binding site" evidence="1">
    <location>
        <position position="104"/>
    </location>
    <ligand>
        <name>Zn(2+)</name>
        <dbReference type="ChEBI" id="CHEBI:29105"/>
        <label>2</label>
    </ligand>
</feature>
<feature type="binding site" evidence="1">
    <location>
        <position position="139"/>
    </location>
    <ligand>
        <name>Zn(2+)</name>
        <dbReference type="ChEBI" id="CHEBI:29105"/>
        <label>2</label>
    </ligand>
</feature>
<feature type="binding site" evidence="1">
    <location>
        <position position="167"/>
    </location>
    <ligand>
        <name>Zn(2+)</name>
        <dbReference type="ChEBI" id="CHEBI:29105"/>
        <label>1</label>
    </ligand>
</feature>
<feature type="binding site" evidence="1">
    <location>
        <position position="353"/>
    </location>
    <ligand>
        <name>Zn(2+)</name>
        <dbReference type="ChEBI" id="CHEBI:29105"/>
        <label>2</label>
    </ligand>
</feature>
<name>DAPE_SHEB8</name>
<proteinExistence type="inferred from homology"/>
<gene>
    <name evidence="1" type="primary">dapE</name>
    <name type="ordered locus">Shew185_2354</name>
</gene>
<protein>
    <recommendedName>
        <fullName evidence="1">Succinyl-diaminopimelate desuccinylase</fullName>
        <shortName evidence="1">SDAP desuccinylase</shortName>
        <ecNumber evidence="1">3.5.1.18</ecNumber>
    </recommendedName>
    <alternativeName>
        <fullName evidence="1">N-succinyl-LL-2,6-diaminoheptanedioate amidohydrolase</fullName>
    </alternativeName>
</protein>
<sequence>MIPADDYPVTELTKALIARPSVTPLDEGCQTLMAERLSAIGFNIEPMVFEDTTNMWARRGNEGPVFCFAGHTDVVPTGDVSRWHTPPFVPTIIDGYLYGRGAADMKGSLAAMVIATERFVAKHPDHNGSIAFLITSDEEGPFINGTTRVIDTLEARNEKITWALVGEPSSTLKLGDVVKNGRRGSLTGNLIVKGIQGHVAYPHLADNPIHKAAPFLAELSQMHWDNGNEFFPPTSFQIANINGGTGASNVIPGALDVMFNFRYSTEVTAEILIERVEALLKAHELGYDISWIFNGLPFLTGDGPLLDATRIAIRQVTGYETDPQTTGGTSDGRFIAPTGAKVLELGPVNATIHKVNECVKVDDLEQLALCYEVILEQLLC</sequence>
<comment type="function">
    <text evidence="1">Catalyzes the hydrolysis of N-succinyl-L,L-diaminopimelic acid (SDAP), forming succinate and LL-2,6-diaminopimelate (DAP), an intermediate involved in the bacterial biosynthesis of lysine and meso-diaminopimelic acid, an essential component of bacterial cell walls.</text>
</comment>
<comment type="catalytic activity">
    <reaction evidence="1">
        <text>N-succinyl-(2S,6S)-2,6-diaminopimelate + H2O = (2S,6S)-2,6-diaminopimelate + succinate</text>
        <dbReference type="Rhea" id="RHEA:22608"/>
        <dbReference type="ChEBI" id="CHEBI:15377"/>
        <dbReference type="ChEBI" id="CHEBI:30031"/>
        <dbReference type="ChEBI" id="CHEBI:57609"/>
        <dbReference type="ChEBI" id="CHEBI:58087"/>
        <dbReference type="EC" id="3.5.1.18"/>
    </reaction>
</comment>
<comment type="cofactor">
    <cofactor evidence="1">
        <name>Zn(2+)</name>
        <dbReference type="ChEBI" id="CHEBI:29105"/>
    </cofactor>
    <cofactor evidence="1">
        <name>Co(2+)</name>
        <dbReference type="ChEBI" id="CHEBI:48828"/>
    </cofactor>
    <text evidence="1">Binds 2 Zn(2+) or Co(2+) ions per subunit.</text>
</comment>
<comment type="pathway">
    <text evidence="1">Amino-acid biosynthesis; L-lysine biosynthesis via DAP pathway; LL-2,6-diaminopimelate from (S)-tetrahydrodipicolinate (succinylase route): step 3/3.</text>
</comment>
<comment type="subunit">
    <text evidence="1">Homodimer.</text>
</comment>
<comment type="similarity">
    <text evidence="1">Belongs to the peptidase M20A family. DapE subfamily.</text>
</comment>
<organism>
    <name type="scientific">Shewanella baltica (strain OS185)</name>
    <dbReference type="NCBI Taxonomy" id="402882"/>
    <lineage>
        <taxon>Bacteria</taxon>
        <taxon>Pseudomonadati</taxon>
        <taxon>Pseudomonadota</taxon>
        <taxon>Gammaproteobacteria</taxon>
        <taxon>Alteromonadales</taxon>
        <taxon>Shewanellaceae</taxon>
        <taxon>Shewanella</taxon>
    </lineage>
</organism>
<evidence type="ECO:0000255" key="1">
    <source>
        <dbReference type="HAMAP-Rule" id="MF_01690"/>
    </source>
</evidence>
<accession>A6WNV3</accession>